<organism>
    <name type="scientific">Shigella boydii serotype 18 (strain CDC 3083-94 / BS512)</name>
    <dbReference type="NCBI Taxonomy" id="344609"/>
    <lineage>
        <taxon>Bacteria</taxon>
        <taxon>Pseudomonadati</taxon>
        <taxon>Pseudomonadota</taxon>
        <taxon>Gammaproteobacteria</taxon>
        <taxon>Enterobacterales</taxon>
        <taxon>Enterobacteriaceae</taxon>
        <taxon>Shigella</taxon>
    </lineage>
</organism>
<keyword id="KW-0997">Cell inner membrane</keyword>
<keyword id="KW-1003">Cell membrane</keyword>
<keyword id="KW-0328">Glycosyltransferase</keyword>
<keyword id="KW-0460">Magnesium</keyword>
<keyword id="KW-0472">Membrane</keyword>
<keyword id="KW-0479">Metal-binding</keyword>
<keyword id="KW-0660">Purine salvage</keyword>
<keyword id="KW-1185">Reference proteome</keyword>
<keyword id="KW-0808">Transferase</keyword>
<dbReference type="EC" id="2.4.2.-" evidence="1"/>
<dbReference type="EC" id="2.4.2.22" evidence="1"/>
<dbReference type="EMBL" id="CP001063">
    <property type="protein sequence ID" value="ACD09447.1"/>
    <property type="molecule type" value="Genomic_DNA"/>
</dbReference>
<dbReference type="RefSeq" id="WP_001291986.1">
    <property type="nucleotide sequence ID" value="NC_010658.1"/>
</dbReference>
<dbReference type="SMR" id="B2U3S9"/>
<dbReference type="STRING" id="344609.SbBS512_E0235"/>
<dbReference type="KEGG" id="sbc:SbBS512_E0235"/>
<dbReference type="HOGENOM" id="CLU_080904_3_0_6"/>
<dbReference type="UniPathway" id="UPA00602">
    <property type="reaction ID" value="UER00658"/>
</dbReference>
<dbReference type="UniPathway" id="UPA00909">
    <property type="reaction ID" value="UER00887"/>
</dbReference>
<dbReference type="Proteomes" id="UP000001030">
    <property type="component" value="Chromosome"/>
</dbReference>
<dbReference type="GO" id="GO:0005829">
    <property type="term" value="C:cytosol"/>
    <property type="evidence" value="ECO:0007669"/>
    <property type="project" value="TreeGrafter"/>
</dbReference>
<dbReference type="GO" id="GO:0005886">
    <property type="term" value="C:plasma membrane"/>
    <property type="evidence" value="ECO:0007669"/>
    <property type="project" value="UniProtKB-SubCell"/>
</dbReference>
<dbReference type="GO" id="GO:0052657">
    <property type="term" value="F:guanine phosphoribosyltransferase activity"/>
    <property type="evidence" value="ECO:0007669"/>
    <property type="project" value="RHEA"/>
</dbReference>
<dbReference type="GO" id="GO:0004422">
    <property type="term" value="F:hypoxanthine phosphoribosyltransferase activity"/>
    <property type="evidence" value="ECO:0007669"/>
    <property type="project" value="RHEA"/>
</dbReference>
<dbReference type="GO" id="GO:0000287">
    <property type="term" value="F:magnesium ion binding"/>
    <property type="evidence" value="ECO:0007669"/>
    <property type="project" value="UniProtKB-UniRule"/>
</dbReference>
<dbReference type="GO" id="GO:0000310">
    <property type="term" value="F:xanthine phosphoribosyltransferase activity"/>
    <property type="evidence" value="ECO:0007669"/>
    <property type="project" value="UniProtKB-UniRule"/>
</dbReference>
<dbReference type="GO" id="GO:0032263">
    <property type="term" value="P:GMP salvage"/>
    <property type="evidence" value="ECO:0007669"/>
    <property type="project" value="UniProtKB-UniRule"/>
</dbReference>
<dbReference type="GO" id="GO:0032264">
    <property type="term" value="P:IMP salvage"/>
    <property type="evidence" value="ECO:0007669"/>
    <property type="project" value="TreeGrafter"/>
</dbReference>
<dbReference type="GO" id="GO:0006166">
    <property type="term" value="P:purine ribonucleoside salvage"/>
    <property type="evidence" value="ECO:0007669"/>
    <property type="project" value="UniProtKB-KW"/>
</dbReference>
<dbReference type="GO" id="GO:0032265">
    <property type="term" value="P:XMP salvage"/>
    <property type="evidence" value="ECO:0007669"/>
    <property type="project" value="UniProtKB-UniRule"/>
</dbReference>
<dbReference type="CDD" id="cd06223">
    <property type="entry name" value="PRTases_typeI"/>
    <property type="match status" value="1"/>
</dbReference>
<dbReference type="FunFam" id="3.40.50.2020:FF:000009">
    <property type="entry name" value="Xanthine phosphoribosyltransferase"/>
    <property type="match status" value="1"/>
</dbReference>
<dbReference type="Gene3D" id="3.40.50.2020">
    <property type="match status" value="1"/>
</dbReference>
<dbReference type="HAMAP" id="MF_01903">
    <property type="entry name" value="XGPRT"/>
    <property type="match status" value="1"/>
</dbReference>
<dbReference type="InterPro" id="IPR000836">
    <property type="entry name" value="PRibTrfase_dom"/>
</dbReference>
<dbReference type="InterPro" id="IPR029057">
    <property type="entry name" value="PRTase-like"/>
</dbReference>
<dbReference type="InterPro" id="IPR023747">
    <property type="entry name" value="Xanthine_Guanine_PRibTrfase"/>
</dbReference>
<dbReference type="NCBIfam" id="NF006613">
    <property type="entry name" value="PRK09177.1"/>
    <property type="match status" value="1"/>
</dbReference>
<dbReference type="PANTHER" id="PTHR39563">
    <property type="entry name" value="XANTHINE PHOSPHORIBOSYLTRANSFERASE"/>
    <property type="match status" value="1"/>
</dbReference>
<dbReference type="PANTHER" id="PTHR39563:SF1">
    <property type="entry name" value="XANTHINE-GUANINE PHOSPHORIBOSYLTRANSFERASE"/>
    <property type="match status" value="1"/>
</dbReference>
<dbReference type="Pfam" id="PF00156">
    <property type="entry name" value="Pribosyltran"/>
    <property type="match status" value="1"/>
</dbReference>
<dbReference type="SUPFAM" id="SSF53271">
    <property type="entry name" value="PRTase-like"/>
    <property type="match status" value="1"/>
</dbReference>
<dbReference type="PROSITE" id="PS00103">
    <property type="entry name" value="PUR_PYR_PR_TRANSFER"/>
    <property type="match status" value="1"/>
</dbReference>
<sequence>MSEKYIVTWDMLQIHARKLASRLMPSEQWKGIIAVSRGGLVPGALLARELGIRHVDTVCISSYDHDNQRELKVLKCAEGDGEGFIVIDDLVDTGGTAVAIREMYPKAHFVTIFAKPAGRPLVDDYVVDIPQDTWIEQPWDMGVVFVPPISGR</sequence>
<protein>
    <recommendedName>
        <fullName evidence="1">Xanthine-guanine phosphoribosyltransferase</fullName>
        <shortName evidence="1">XGPRT</shortName>
        <ecNumber evidence="1">2.4.2.-</ecNumber>
        <ecNumber evidence="1">2.4.2.22</ecNumber>
    </recommendedName>
    <alternativeName>
        <fullName evidence="1">Xanthine phosphoribosyltransferase</fullName>
    </alternativeName>
</protein>
<gene>
    <name evidence="1" type="primary">gpt</name>
    <name type="ordered locus">SbBS512_E0235</name>
</gene>
<feature type="chain" id="PRO_1000188761" description="Xanthine-guanine phosphoribosyltransferase">
    <location>
        <begin position="1"/>
        <end position="152"/>
    </location>
</feature>
<feature type="binding site" evidence="1">
    <location>
        <begin position="37"/>
        <end position="38"/>
    </location>
    <ligand>
        <name>5-phospho-alpha-D-ribose 1-diphosphate</name>
        <dbReference type="ChEBI" id="CHEBI:58017"/>
    </ligand>
</feature>
<feature type="binding site" evidence="1">
    <location>
        <position position="69"/>
    </location>
    <ligand>
        <name>5-phospho-alpha-D-ribose 1-diphosphate</name>
        <dbReference type="ChEBI" id="CHEBI:58017"/>
    </ligand>
</feature>
<feature type="binding site" evidence="1">
    <location>
        <position position="69"/>
    </location>
    <ligand>
        <name>GMP</name>
        <dbReference type="ChEBI" id="CHEBI:58115"/>
    </ligand>
</feature>
<feature type="binding site" evidence="1">
    <location>
        <begin position="88"/>
        <end position="96"/>
    </location>
    <ligand>
        <name>5-phospho-alpha-D-ribose 1-diphosphate</name>
        <dbReference type="ChEBI" id="CHEBI:58017"/>
    </ligand>
</feature>
<feature type="binding site" evidence="1">
    <location>
        <position position="89"/>
    </location>
    <ligand>
        <name>Mg(2+)</name>
        <dbReference type="ChEBI" id="CHEBI:18420"/>
    </ligand>
</feature>
<feature type="binding site" evidence="1">
    <location>
        <begin position="92"/>
        <end position="96"/>
    </location>
    <ligand>
        <name>GMP</name>
        <dbReference type="ChEBI" id="CHEBI:58115"/>
    </ligand>
</feature>
<feature type="binding site" evidence="1">
    <location>
        <position position="92"/>
    </location>
    <ligand>
        <name>guanine</name>
        <dbReference type="ChEBI" id="CHEBI:16235"/>
    </ligand>
</feature>
<feature type="binding site" evidence="1">
    <location>
        <position position="92"/>
    </location>
    <ligand>
        <name>xanthine</name>
        <dbReference type="ChEBI" id="CHEBI:17712"/>
    </ligand>
</feature>
<feature type="binding site" evidence="1">
    <location>
        <begin position="134"/>
        <end position="135"/>
    </location>
    <ligand>
        <name>GMP</name>
        <dbReference type="ChEBI" id="CHEBI:58115"/>
    </ligand>
</feature>
<feature type="binding site" evidence="1">
    <location>
        <position position="135"/>
    </location>
    <ligand>
        <name>guanine</name>
        <dbReference type="ChEBI" id="CHEBI:16235"/>
    </ligand>
</feature>
<feature type="binding site" evidence="1">
    <location>
        <position position="135"/>
    </location>
    <ligand>
        <name>xanthine</name>
        <dbReference type="ChEBI" id="CHEBI:17712"/>
    </ligand>
</feature>
<reference key="1">
    <citation type="submission" date="2008-05" db="EMBL/GenBank/DDBJ databases">
        <title>Complete sequence of Shigella boydii serotype 18 strain BS512.</title>
        <authorList>
            <person name="Rasko D.A."/>
            <person name="Rosovitz M."/>
            <person name="Maurelli A.T."/>
            <person name="Myers G."/>
            <person name="Seshadri R."/>
            <person name="Cer R."/>
            <person name="Jiang L."/>
            <person name="Ravel J."/>
            <person name="Sebastian Y."/>
        </authorList>
    </citation>
    <scope>NUCLEOTIDE SEQUENCE [LARGE SCALE GENOMIC DNA]</scope>
    <source>
        <strain>CDC 3083-94 / BS512</strain>
    </source>
</reference>
<proteinExistence type="inferred from homology"/>
<comment type="function">
    <text evidence="1">Purine salvage pathway enzyme that catalyzes the transfer of the ribosyl-5-phosphate group from 5-phospho-alpha-D-ribose 1-diphosphate (PRPP) to the N9 position of the 6-oxopurines guanine and xanthine to form the corresponding ribonucleotides GMP (guanosine 5'-monophosphate) and XMP (xanthosine 5'-monophosphate), with the release of PPi. To a lesser extent, also acts on hypoxanthine.</text>
</comment>
<comment type="catalytic activity">
    <reaction evidence="1">
        <text>GMP + diphosphate = guanine + 5-phospho-alpha-D-ribose 1-diphosphate</text>
        <dbReference type="Rhea" id="RHEA:25424"/>
        <dbReference type="ChEBI" id="CHEBI:16235"/>
        <dbReference type="ChEBI" id="CHEBI:33019"/>
        <dbReference type="ChEBI" id="CHEBI:58017"/>
        <dbReference type="ChEBI" id="CHEBI:58115"/>
    </reaction>
    <physiologicalReaction direction="right-to-left" evidence="1">
        <dbReference type="Rhea" id="RHEA:25426"/>
    </physiologicalReaction>
</comment>
<comment type="catalytic activity">
    <reaction evidence="1">
        <text>XMP + diphosphate = xanthine + 5-phospho-alpha-D-ribose 1-diphosphate</text>
        <dbReference type="Rhea" id="RHEA:10800"/>
        <dbReference type="ChEBI" id="CHEBI:17712"/>
        <dbReference type="ChEBI" id="CHEBI:33019"/>
        <dbReference type="ChEBI" id="CHEBI:57464"/>
        <dbReference type="ChEBI" id="CHEBI:58017"/>
        <dbReference type="EC" id="2.4.2.22"/>
    </reaction>
    <physiologicalReaction direction="right-to-left" evidence="1">
        <dbReference type="Rhea" id="RHEA:10802"/>
    </physiologicalReaction>
</comment>
<comment type="catalytic activity">
    <reaction evidence="1">
        <text>IMP + diphosphate = hypoxanthine + 5-phospho-alpha-D-ribose 1-diphosphate</text>
        <dbReference type="Rhea" id="RHEA:17973"/>
        <dbReference type="ChEBI" id="CHEBI:17368"/>
        <dbReference type="ChEBI" id="CHEBI:33019"/>
        <dbReference type="ChEBI" id="CHEBI:58017"/>
        <dbReference type="ChEBI" id="CHEBI:58053"/>
    </reaction>
    <physiologicalReaction direction="right-to-left" evidence="1">
        <dbReference type="Rhea" id="RHEA:17975"/>
    </physiologicalReaction>
</comment>
<comment type="cofactor">
    <cofactor evidence="1">
        <name>Mg(2+)</name>
        <dbReference type="ChEBI" id="CHEBI:18420"/>
    </cofactor>
</comment>
<comment type="pathway">
    <text evidence="1">Purine metabolism; GMP biosynthesis via salvage pathway; GMP from guanine: step 1/1.</text>
</comment>
<comment type="pathway">
    <text evidence="1">Purine metabolism; XMP biosynthesis via salvage pathway; XMP from xanthine: step 1/1.</text>
</comment>
<comment type="subunit">
    <text evidence="1">Homotetramer.</text>
</comment>
<comment type="subcellular location">
    <subcellularLocation>
        <location evidence="1">Cell inner membrane</location>
        <topology evidence="1">Peripheral membrane protein</topology>
    </subcellularLocation>
</comment>
<comment type="similarity">
    <text evidence="1">Belongs to the purine/pyrimidine phosphoribosyltransferase family. XGPT subfamily.</text>
</comment>
<accession>B2U3S9</accession>
<name>XGPT_SHIB3</name>
<evidence type="ECO:0000255" key="1">
    <source>
        <dbReference type="HAMAP-Rule" id="MF_01903"/>
    </source>
</evidence>